<gene>
    <name evidence="1" type="primary">tgt</name>
    <name type="ordered locus">RT0707</name>
</gene>
<comment type="function">
    <text evidence="1">Catalyzes the base-exchange of a guanine (G) residue with the queuine precursor 7-aminomethyl-7-deazaguanine (PreQ1) at position 34 (anticodon wobble position) in tRNAs with GU(N) anticodons (tRNA-Asp, -Asn, -His and -Tyr). Catalysis occurs through a double-displacement mechanism. The nucleophile active site attacks the C1' of nucleotide 34 to detach the guanine base from the RNA, forming a covalent enzyme-RNA intermediate. The proton acceptor active site deprotonates the incoming PreQ1, allowing a nucleophilic attack on the C1' of the ribose to form the product. After dissociation, two additional enzymatic reactions on the tRNA convert PreQ1 to queuine (Q), resulting in the hypermodified nucleoside queuosine (7-(((4,5-cis-dihydroxy-2-cyclopenten-1-yl)amino)methyl)-7-deazaguanosine).</text>
</comment>
<comment type="catalytic activity">
    <reaction evidence="1">
        <text>7-aminomethyl-7-carbaguanine + guanosine(34) in tRNA = 7-aminomethyl-7-carbaguanosine(34) in tRNA + guanine</text>
        <dbReference type="Rhea" id="RHEA:24104"/>
        <dbReference type="Rhea" id="RHEA-COMP:10341"/>
        <dbReference type="Rhea" id="RHEA-COMP:10342"/>
        <dbReference type="ChEBI" id="CHEBI:16235"/>
        <dbReference type="ChEBI" id="CHEBI:58703"/>
        <dbReference type="ChEBI" id="CHEBI:74269"/>
        <dbReference type="ChEBI" id="CHEBI:82833"/>
        <dbReference type="EC" id="2.4.2.29"/>
    </reaction>
</comment>
<comment type="cofactor">
    <cofactor evidence="1">
        <name>Zn(2+)</name>
        <dbReference type="ChEBI" id="CHEBI:29105"/>
    </cofactor>
    <text evidence="1">Binds 1 zinc ion per subunit.</text>
</comment>
<comment type="pathway">
    <text evidence="1">tRNA modification; tRNA-queuosine biosynthesis.</text>
</comment>
<comment type="subunit">
    <text evidence="1">Homodimer. Within each dimer, one monomer is responsible for RNA recognition and catalysis, while the other monomer binds to the replacement base PreQ1.</text>
</comment>
<comment type="similarity">
    <text evidence="1">Belongs to the queuine tRNA-ribosyltransferase family.</text>
</comment>
<proteinExistence type="inferred from homology"/>
<organism>
    <name type="scientific">Rickettsia typhi (strain ATCC VR-144 / Wilmington)</name>
    <dbReference type="NCBI Taxonomy" id="257363"/>
    <lineage>
        <taxon>Bacteria</taxon>
        <taxon>Pseudomonadati</taxon>
        <taxon>Pseudomonadota</taxon>
        <taxon>Alphaproteobacteria</taxon>
        <taxon>Rickettsiales</taxon>
        <taxon>Rickettsiaceae</taxon>
        <taxon>Rickettsieae</taxon>
        <taxon>Rickettsia</taxon>
        <taxon>typhus group</taxon>
    </lineage>
</organism>
<reference key="1">
    <citation type="journal article" date="2004" name="J. Bacteriol.">
        <title>Complete genome sequence of Rickettsia typhi and comparison with sequences of other Rickettsiae.</title>
        <authorList>
            <person name="McLeod M.P."/>
            <person name="Qin X."/>
            <person name="Karpathy S.E."/>
            <person name="Gioia J."/>
            <person name="Highlander S.K."/>
            <person name="Fox G.E."/>
            <person name="McNeill T.Z."/>
            <person name="Jiang H."/>
            <person name="Muzny D."/>
            <person name="Jacob L.S."/>
            <person name="Hawes A.C."/>
            <person name="Sodergren E."/>
            <person name="Gill R."/>
            <person name="Hume J."/>
            <person name="Morgan M."/>
            <person name="Fan G."/>
            <person name="Amin A.G."/>
            <person name="Gibbs R.A."/>
            <person name="Hong C."/>
            <person name="Yu X.-J."/>
            <person name="Walker D.H."/>
            <person name="Weinstock G.M."/>
        </authorList>
    </citation>
    <scope>NUCLEOTIDE SEQUENCE [LARGE SCALE GENOMIC DNA]</scope>
    <source>
        <strain>ATCC VR-144 / Wilmington</strain>
    </source>
</reference>
<accession>Q68W26</accession>
<evidence type="ECO:0000255" key="1">
    <source>
        <dbReference type="HAMAP-Rule" id="MF_00168"/>
    </source>
</evidence>
<sequence>MSKFSFTIHSNYKKARSGVITTAHGKIRTPTFMPVGTRGTVKAMLTESVVETGADILLGNTYHLMLQPSAERIAYLGGLHKFMNWDKPILTDSGGFQVMSLSKLRKITEEGVSFRSHINGNKYMLTPEYSTEIQYLLGSTITMALDECTPYPSTFEEAKTSMNLTTRWANRSRDAFVKREGYAQFGIIQGSVYKELREQSVKDLVKFDFDGYAIGGLAVGEGQELMFKVLDYVSDFLPQNKPRYLMGVGKPADIIGAVSRGIDMFDCVIPTRSGRNGQAFTKYGTVNIRNSKYAEDKAPLEYDCKCPACTNYTKAYLHHLVRIREILGPMLMTWHNLTYFQNLMSRIRAYIKLGKDFDFVN</sequence>
<protein>
    <recommendedName>
        <fullName evidence="1">Queuine tRNA-ribosyltransferase</fullName>
        <ecNumber evidence="1">2.4.2.29</ecNumber>
    </recommendedName>
    <alternativeName>
        <fullName evidence="1">Guanine insertion enzyme</fullName>
    </alternativeName>
    <alternativeName>
        <fullName evidence="1">tRNA-guanine transglycosylase</fullName>
    </alternativeName>
</protein>
<name>TGT_RICTY</name>
<keyword id="KW-0328">Glycosyltransferase</keyword>
<keyword id="KW-0479">Metal-binding</keyword>
<keyword id="KW-0671">Queuosine biosynthesis</keyword>
<keyword id="KW-0808">Transferase</keyword>
<keyword id="KW-0819">tRNA processing</keyword>
<keyword id="KW-0862">Zinc</keyword>
<dbReference type="EC" id="2.4.2.29" evidence="1"/>
<dbReference type="EMBL" id="AE017197">
    <property type="protein sequence ID" value="AAU04166.1"/>
    <property type="molecule type" value="Genomic_DNA"/>
</dbReference>
<dbReference type="RefSeq" id="WP_011191143.1">
    <property type="nucleotide sequence ID" value="NC_006142.1"/>
</dbReference>
<dbReference type="SMR" id="Q68W26"/>
<dbReference type="KEGG" id="rty:RT0707"/>
<dbReference type="eggNOG" id="COG0343">
    <property type="taxonomic scope" value="Bacteria"/>
</dbReference>
<dbReference type="HOGENOM" id="CLU_022060_0_1_5"/>
<dbReference type="OrthoDB" id="9805417at2"/>
<dbReference type="UniPathway" id="UPA00392"/>
<dbReference type="Proteomes" id="UP000000604">
    <property type="component" value="Chromosome"/>
</dbReference>
<dbReference type="GO" id="GO:0005737">
    <property type="term" value="C:cytoplasm"/>
    <property type="evidence" value="ECO:0007669"/>
    <property type="project" value="TreeGrafter"/>
</dbReference>
<dbReference type="GO" id="GO:0046872">
    <property type="term" value="F:metal ion binding"/>
    <property type="evidence" value="ECO:0007669"/>
    <property type="project" value="UniProtKB-KW"/>
</dbReference>
<dbReference type="GO" id="GO:0008479">
    <property type="term" value="F:tRNA-guanosine(34) queuine transglycosylase activity"/>
    <property type="evidence" value="ECO:0007669"/>
    <property type="project" value="UniProtKB-UniRule"/>
</dbReference>
<dbReference type="GO" id="GO:0008616">
    <property type="term" value="P:queuosine biosynthetic process"/>
    <property type="evidence" value="ECO:0007669"/>
    <property type="project" value="UniProtKB-UniRule"/>
</dbReference>
<dbReference type="GO" id="GO:0002099">
    <property type="term" value="P:tRNA wobble guanine modification"/>
    <property type="evidence" value="ECO:0007669"/>
    <property type="project" value="TreeGrafter"/>
</dbReference>
<dbReference type="GO" id="GO:0101030">
    <property type="term" value="P:tRNA-guanine transglycosylation"/>
    <property type="evidence" value="ECO:0007669"/>
    <property type="project" value="InterPro"/>
</dbReference>
<dbReference type="FunFam" id="3.20.20.105:FF:000001">
    <property type="entry name" value="Queuine tRNA-ribosyltransferase"/>
    <property type="match status" value="1"/>
</dbReference>
<dbReference type="Gene3D" id="3.20.20.105">
    <property type="entry name" value="Queuine tRNA-ribosyltransferase-like"/>
    <property type="match status" value="1"/>
</dbReference>
<dbReference type="HAMAP" id="MF_00168">
    <property type="entry name" value="Q_tRNA_Tgt"/>
    <property type="match status" value="1"/>
</dbReference>
<dbReference type="InterPro" id="IPR050076">
    <property type="entry name" value="ArchSynthase1/Queuine_TRR"/>
</dbReference>
<dbReference type="InterPro" id="IPR004803">
    <property type="entry name" value="TGT"/>
</dbReference>
<dbReference type="InterPro" id="IPR036511">
    <property type="entry name" value="TGT-like_sf"/>
</dbReference>
<dbReference type="InterPro" id="IPR002616">
    <property type="entry name" value="tRNA_ribo_trans-like"/>
</dbReference>
<dbReference type="NCBIfam" id="TIGR00430">
    <property type="entry name" value="Q_tRNA_tgt"/>
    <property type="match status" value="1"/>
</dbReference>
<dbReference type="NCBIfam" id="TIGR00449">
    <property type="entry name" value="tgt_general"/>
    <property type="match status" value="1"/>
</dbReference>
<dbReference type="PANTHER" id="PTHR46499">
    <property type="entry name" value="QUEUINE TRNA-RIBOSYLTRANSFERASE"/>
    <property type="match status" value="1"/>
</dbReference>
<dbReference type="PANTHER" id="PTHR46499:SF1">
    <property type="entry name" value="QUEUINE TRNA-RIBOSYLTRANSFERASE"/>
    <property type="match status" value="1"/>
</dbReference>
<dbReference type="Pfam" id="PF01702">
    <property type="entry name" value="TGT"/>
    <property type="match status" value="1"/>
</dbReference>
<dbReference type="SUPFAM" id="SSF51713">
    <property type="entry name" value="tRNA-guanine transglycosylase"/>
    <property type="match status" value="1"/>
</dbReference>
<feature type="chain" id="PRO_0000135515" description="Queuine tRNA-ribosyltransferase">
    <location>
        <begin position="1"/>
        <end position="361"/>
    </location>
</feature>
<feature type="region of interest" description="RNA binding" evidence="1">
    <location>
        <begin position="247"/>
        <end position="253"/>
    </location>
</feature>
<feature type="region of interest" description="RNA binding; important for wobble base 34 recognition" evidence="1">
    <location>
        <begin position="271"/>
        <end position="275"/>
    </location>
</feature>
<feature type="active site" description="Proton acceptor" evidence="1">
    <location>
        <position position="92"/>
    </location>
</feature>
<feature type="active site" description="Nucleophile" evidence="1">
    <location>
        <position position="266"/>
    </location>
</feature>
<feature type="binding site" evidence="1">
    <location>
        <begin position="92"/>
        <end position="96"/>
    </location>
    <ligand>
        <name>substrate</name>
    </ligand>
</feature>
<feature type="binding site" evidence="1">
    <location>
        <position position="146"/>
    </location>
    <ligand>
        <name>substrate</name>
    </ligand>
</feature>
<feature type="binding site" evidence="1">
    <location>
        <position position="189"/>
    </location>
    <ligand>
        <name>substrate</name>
    </ligand>
</feature>
<feature type="binding site" evidence="1">
    <location>
        <position position="216"/>
    </location>
    <ligand>
        <name>substrate</name>
    </ligand>
</feature>
<feature type="binding site" evidence="1">
    <location>
        <position position="304"/>
    </location>
    <ligand>
        <name>Zn(2+)</name>
        <dbReference type="ChEBI" id="CHEBI:29105"/>
    </ligand>
</feature>
<feature type="binding site" evidence="1">
    <location>
        <position position="306"/>
    </location>
    <ligand>
        <name>Zn(2+)</name>
        <dbReference type="ChEBI" id="CHEBI:29105"/>
    </ligand>
</feature>
<feature type="binding site" evidence="1">
    <location>
        <position position="309"/>
    </location>
    <ligand>
        <name>Zn(2+)</name>
        <dbReference type="ChEBI" id="CHEBI:29105"/>
    </ligand>
</feature>
<feature type="binding site" evidence="1">
    <location>
        <position position="335"/>
    </location>
    <ligand>
        <name>Zn(2+)</name>
        <dbReference type="ChEBI" id="CHEBI:29105"/>
    </ligand>
</feature>